<keyword id="KW-0238">DNA-binding</keyword>
<keyword id="KW-0479">Metal-binding</keyword>
<keyword id="KW-0539">Nucleus</keyword>
<keyword id="KW-0597">Phosphoprotein</keyword>
<keyword id="KW-1185">Reference proteome</keyword>
<keyword id="KW-0677">Repeat</keyword>
<keyword id="KW-0804">Transcription</keyword>
<keyword id="KW-0805">Transcription regulation</keyword>
<keyword id="KW-0862">Zinc</keyword>
<keyword id="KW-0863">Zinc-finger</keyword>
<sequence length="638" mass="66029">MEPSALSPSGATLPLPLSLAPPPLPLPAAAVVHVSFPEVTSALLESLNQQRLQGQLCDVSIRVQGREFRAHRAVLAASSPYFHDQVLLKGMTSISLPSVMDPGAFETVLASAYTGRLSMAAADIVNFLTVGSVLQMWHIVDKCTELLREGRSAATTTTVTTAAAPSVSVPCASVPSGNGGTVAPATVGSVRSHTSSRASENQSPSSSNYFSPRESTDFSSTSQDAFVASAAGSGNRRDGGPVFPAPVVGSAGTTSGKLLLEADELCDDGGDGRGAVAPGAGLRRSNCMPASAVPQKHWVYVKQARNCPAPASLVHQDPDLEDEEEEEDLVLTCEDDEDEEMGGGSGVPAGGEPEATLSISDVRTLTEPADKGEEQVNFCESSNDFGPYEGGGAGAGLDDPGGPTPSSYALTHPPRPLLPLDVPGNQILVFPSSSSQAPGQPPGNTAEHGAVTLGGTSAVGLGIPSGSGGAPGGTGNSDGNKIFLCHCGKAFSHKSMRDRHVNMHLNLRPFDCPVCNKKFKMKHHLTEHMKTHTGLKPYECSVCAKKFMWRDSFMRHRGHCERRHRMGVGGVGSGPGPGPGPGTPSGPALQPKRESSTVGGGSGDEANSATPPSHRRVWSPPSVHKVEMDFSGGGGAAH</sequence>
<feature type="chain" id="PRO_0000047518" description="Zinc finger and BTB domain-containing protein 22">
    <location>
        <begin position="1"/>
        <end position="638"/>
    </location>
</feature>
<feature type="domain" description="BTB" evidence="2">
    <location>
        <begin position="57"/>
        <end position="121"/>
    </location>
</feature>
<feature type="zinc finger region" description="C2H2-type 1; atypical" evidence="3">
    <location>
        <begin position="483"/>
        <end position="504"/>
    </location>
</feature>
<feature type="zinc finger region" description="C2H2-type 2" evidence="3">
    <location>
        <begin position="510"/>
        <end position="532"/>
    </location>
</feature>
<feature type="zinc finger region" description="C2H2-type 3" evidence="3">
    <location>
        <begin position="538"/>
        <end position="559"/>
    </location>
</feature>
<feature type="region of interest" description="Disordered" evidence="4">
    <location>
        <begin position="171"/>
        <end position="223"/>
    </location>
</feature>
<feature type="region of interest" description="Disordered" evidence="4">
    <location>
        <begin position="229"/>
        <end position="248"/>
    </location>
</feature>
<feature type="region of interest" description="Disordered" evidence="4">
    <location>
        <begin position="335"/>
        <end position="354"/>
    </location>
</feature>
<feature type="region of interest" description="Disordered" evidence="4">
    <location>
        <begin position="367"/>
        <end position="451"/>
    </location>
</feature>
<feature type="region of interest" description="Disordered" evidence="4">
    <location>
        <begin position="564"/>
        <end position="638"/>
    </location>
</feature>
<feature type="compositionally biased region" description="Polar residues" evidence="4">
    <location>
        <begin position="189"/>
        <end position="210"/>
    </location>
</feature>
<feature type="modified residue" description="Phosphoserine" evidence="1">
    <location>
        <position position="203"/>
    </location>
</feature>
<protein>
    <recommendedName>
        <fullName>Zinc finger and BTB domain-containing protein 22</fullName>
    </recommendedName>
    <alternativeName>
        <fullName>Protein BING1</fullName>
    </alternativeName>
    <alternativeName>
        <fullName>Zinc finger protein 297</fullName>
    </alternativeName>
</protein>
<comment type="function">
    <text>May be involved in transcriptional regulation.</text>
</comment>
<comment type="subcellular location">
    <subcellularLocation>
        <location evidence="5">Nucleus</location>
    </subcellularLocation>
</comment>
<comment type="similarity">
    <text evidence="5">Belongs to the krueppel C2H2-type zinc-finger protein family.</text>
</comment>
<organism>
    <name type="scientific">Mus musculus</name>
    <name type="common">Mouse</name>
    <dbReference type="NCBI Taxonomy" id="10090"/>
    <lineage>
        <taxon>Eukaryota</taxon>
        <taxon>Metazoa</taxon>
        <taxon>Chordata</taxon>
        <taxon>Craniata</taxon>
        <taxon>Vertebrata</taxon>
        <taxon>Euteleostomi</taxon>
        <taxon>Mammalia</taxon>
        <taxon>Eutheria</taxon>
        <taxon>Euarchontoglires</taxon>
        <taxon>Glires</taxon>
        <taxon>Rodentia</taxon>
        <taxon>Myomorpha</taxon>
        <taxon>Muroidea</taxon>
        <taxon>Muridae</taxon>
        <taxon>Murinae</taxon>
        <taxon>Mus</taxon>
        <taxon>Mus</taxon>
    </lineage>
</organism>
<name>ZBT22_MOUSE</name>
<accession>Q9Z0G7</accession>
<proteinExistence type="evidence at transcript level"/>
<evidence type="ECO:0000250" key="1">
    <source>
        <dbReference type="UniProtKB" id="O15209"/>
    </source>
</evidence>
<evidence type="ECO:0000255" key="2">
    <source>
        <dbReference type="PROSITE-ProRule" id="PRU00037"/>
    </source>
</evidence>
<evidence type="ECO:0000255" key="3">
    <source>
        <dbReference type="PROSITE-ProRule" id="PRU00042"/>
    </source>
</evidence>
<evidence type="ECO:0000256" key="4">
    <source>
        <dbReference type="SAM" id="MobiDB-lite"/>
    </source>
</evidence>
<evidence type="ECO:0000305" key="5"/>
<dbReference type="EMBL" id="AF110520">
    <property type="protein sequence ID" value="AAC97972.1"/>
    <property type="molecule type" value="Genomic_DNA"/>
</dbReference>
<dbReference type="EMBL" id="AF100956">
    <property type="protein sequence ID" value="AAC69892.1"/>
    <property type="molecule type" value="Genomic_DNA"/>
</dbReference>
<dbReference type="EMBL" id="BC026964">
    <property type="protein sequence ID" value="AAH26964.1"/>
    <property type="molecule type" value="mRNA"/>
</dbReference>
<dbReference type="EMBL" id="BC052154">
    <property type="protein sequence ID" value="AAH52154.1"/>
    <property type="molecule type" value="mRNA"/>
</dbReference>
<dbReference type="CCDS" id="CCDS28634.1"/>
<dbReference type="RefSeq" id="NP_065650.1">
    <property type="nucleotide sequence ID" value="NM_020625.3"/>
</dbReference>
<dbReference type="SMR" id="Q9Z0G7"/>
<dbReference type="BioGRID" id="219885">
    <property type="interactions" value="3"/>
</dbReference>
<dbReference type="FunCoup" id="Q9Z0G7">
    <property type="interactions" value="570"/>
</dbReference>
<dbReference type="IntAct" id="Q9Z0G7">
    <property type="interactions" value="2"/>
</dbReference>
<dbReference type="STRING" id="10090.ENSMUSP00000057466"/>
<dbReference type="GlyGen" id="Q9Z0G7">
    <property type="glycosylation" value="3 sites"/>
</dbReference>
<dbReference type="iPTMnet" id="Q9Z0G7"/>
<dbReference type="PhosphoSitePlus" id="Q9Z0G7"/>
<dbReference type="PaxDb" id="10090-ENSMUSP00000057466"/>
<dbReference type="ProteomicsDB" id="302102"/>
<dbReference type="Antibodypedia" id="29118">
    <property type="antibodies" value="110 antibodies from 21 providers"/>
</dbReference>
<dbReference type="DNASU" id="81630"/>
<dbReference type="Ensembl" id="ENSMUST00000053429.11">
    <property type="protein sequence ID" value="ENSMUSP00000057466.10"/>
    <property type="gene ID" value="ENSMUSG00000051390.11"/>
</dbReference>
<dbReference type="GeneID" id="81630"/>
<dbReference type="KEGG" id="mmu:81630"/>
<dbReference type="UCSC" id="uc008cac.1">
    <property type="organism name" value="mouse"/>
</dbReference>
<dbReference type="AGR" id="MGI:1931870"/>
<dbReference type="CTD" id="9278"/>
<dbReference type="MGI" id="MGI:1931870">
    <property type="gene designation" value="Zbtb22"/>
</dbReference>
<dbReference type="VEuPathDB" id="HostDB:ENSMUSG00000051390"/>
<dbReference type="eggNOG" id="KOG1721">
    <property type="taxonomic scope" value="Eukaryota"/>
</dbReference>
<dbReference type="GeneTree" id="ENSGT00940000160991"/>
<dbReference type="HOGENOM" id="CLU_029118_2_0_1"/>
<dbReference type="InParanoid" id="Q9Z0G7"/>
<dbReference type="OMA" id="KPYDCLS"/>
<dbReference type="OrthoDB" id="10004641at2759"/>
<dbReference type="PhylomeDB" id="Q9Z0G7"/>
<dbReference type="BioGRID-ORCS" id="81630">
    <property type="hits" value="6 hits in 77 CRISPR screens"/>
</dbReference>
<dbReference type="ChiTaRS" id="Zbtb22">
    <property type="organism name" value="mouse"/>
</dbReference>
<dbReference type="PRO" id="PR:Q9Z0G7"/>
<dbReference type="Proteomes" id="UP000000589">
    <property type="component" value="Chromosome 17"/>
</dbReference>
<dbReference type="RNAct" id="Q9Z0G7">
    <property type="molecule type" value="protein"/>
</dbReference>
<dbReference type="Bgee" id="ENSMUSG00000051390">
    <property type="expression patterns" value="Expressed in granulocyte and 78 other cell types or tissues"/>
</dbReference>
<dbReference type="ExpressionAtlas" id="Q9Z0G7">
    <property type="expression patterns" value="baseline and differential"/>
</dbReference>
<dbReference type="GO" id="GO:0005634">
    <property type="term" value="C:nucleus"/>
    <property type="evidence" value="ECO:0007669"/>
    <property type="project" value="UniProtKB-SubCell"/>
</dbReference>
<dbReference type="GO" id="GO:1990837">
    <property type="term" value="F:sequence-specific double-stranded DNA binding"/>
    <property type="evidence" value="ECO:0007669"/>
    <property type="project" value="Ensembl"/>
</dbReference>
<dbReference type="GO" id="GO:0008270">
    <property type="term" value="F:zinc ion binding"/>
    <property type="evidence" value="ECO:0007669"/>
    <property type="project" value="UniProtKB-KW"/>
</dbReference>
<dbReference type="CDD" id="cd18210">
    <property type="entry name" value="BTB_POZ_ZBTB22_BING1"/>
    <property type="match status" value="1"/>
</dbReference>
<dbReference type="FunFam" id="3.30.710.10:FF:000107">
    <property type="entry name" value="Zinc finger and BTB domain containing 22"/>
    <property type="match status" value="1"/>
</dbReference>
<dbReference type="FunFam" id="3.30.160.60:FF:000145">
    <property type="entry name" value="Zinc finger protein 574"/>
    <property type="match status" value="1"/>
</dbReference>
<dbReference type="Gene3D" id="3.30.160.60">
    <property type="entry name" value="Classic Zinc Finger"/>
    <property type="match status" value="1"/>
</dbReference>
<dbReference type="Gene3D" id="3.30.710.10">
    <property type="entry name" value="Potassium Channel Kv1.1, Chain A"/>
    <property type="match status" value="1"/>
</dbReference>
<dbReference type="InterPro" id="IPR000210">
    <property type="entry name" value="BTB/POZ_dom"/>
</dbReference>
<dbReference type="InterPro" id="IPR011333">
    <property type="entry name" value="SKP1/BTB/POZ_sf"/>
</dbReference>
<dbReference type="InterPro" id="IPR036236">
    <property type="entry name" value="Znf_C2H2_sf"/>
</dbReference>
<dbReference type="InterPro" id="IPR013087">
    <property type="entry name" value="Znf_C2H2_type"/>
</dbReference>
<dbReference type="InterPro" id="IPR050457">
    <property type="entry name" value="ZnFinger_BTB_dom_contain"/>
</dbReference>
<dbReference type="PANTHER" id="PTHR46105">
    <property type="entry name" value="AGAP004733-PA"/>
    <property type="match status" value="1"/>
</dbReference>
<dbReference type="PANTHER" id="PTHR46105:SF14">
    <property type="entry name" value="ZINC FINGER AND BTB DOMAIN-CONTAINING PROTEIN 22"/>
    <property type="match status" value="1"/>
</dbReference>
<dbReference type="Pfam" id="PF00651">
    <property type="entry name" value="BTB"/>
    <property type="match status" value="1"/>
</dbReference>
<dbReference type="Pfam" id="PF00096">
    <property type="entry name" value="zf-C2H2"/>
    <property type="match status" value="1"/>
</dbReference>
<dbReference type="SMART" id="SM00225">
    <property type="entry name" value="BTB"/>
    <property type="match status" value="1"/>
</dbReference>
<dbReference type="SMART" id="SM00355">
    <property type="entry name" value="ZnF_C2H2"/>
    <property type="match status" value="3"/>
</dbReference>
<dbReference type="SUPFAM" id="SSF57667">
    <property type="entry name" value="beta-beta-alpha zinc fingers"/>
    <property type="match status" value="1"/>
</dbReference>
<dbReference type="SUPFAM" id="SSF54695">
    <property type="entry name" value="POZ domain"/>
    <property type="match status" value="1"/>
</dbReference>
<dbReference type="PROSITE" id="PS50097">
    <property type="entry name" value="BTB"/>
    <property type="match status" value="1"/>
</dbReference>
<dbReference type="PROSITE" id="PS00028">
    <property type="entry name" value="ZINC_FINGER_C2H2_1"/>
    <property type="match status" value="1"/>
</dbReference>
<dbReference type="PROSITE" id="PS50157">
    <property type="entry name" value="ZINC_FINGER_C2H2_2"/>
    <property type="match status" value="3"/>
</dbReference>
<gene>
    <name type="primary">Zbtb22</name>
    <name type="synonym">Bing1</name>
    <name type="synonym">Zfp297</name>
    <name type="synonym">Znf297</name>
</gene>
<reference key="1">
    <citation type="submission" date="1998-10" db="EMBL/GenBank/DDBJ databases">
        <title>Sequence of the mouse major histocompatibility complex class II region.</title>
        <authorList>
            <person name="Rowen L."/>
            <person name="Qin S."/>
            <person name="Madan A."/>
            <person name="Loretz C."/>
            <person name="James R."/>
            <person name="Dors M."/>
            <person name="Mix L."/>
            <person name="Hall J."/>
            <person name="Lasky S."/>
            <person name="Hood L."/>
        </authorList>
    </citation>
    <scope>NUCLEOTIDE SEQUENCE [LARGE SCALE GENOMIC DNA]</scope>
    <source>
        <strain>129/SvJ</strain>
    </source>
</reference>
<reference key="2">
    <citation type="journal article" date="2004" name="Genome Res.">
        <title>The status, quality, and expansion of the NIH full-length cDNA project: the Mammalian Gene Collection (MGC).</title>
        <authorList>
            <consortium name="The MGC Project Team"/>
        </authorList>
    </citation>
    <scope>NUCLEOTIDE SEQUENCE [LARGE SCALE MRNA]</scope>
    <source>
        <strain>C57BL/6J</strain>
        <strain>FVB/N</strain>
        <tissue>Embryo</tissue>
        <tissue>Kidney</tissue>
    </source>
</reference>